<protein>
    <recommendedName>
        <fullName>Serine/threonine-protein kinase bur1</fullName>
        <ecNumber>2.7.11.22</ecNumber>
        <ecNumber>2.7.11.23</ecNumber>
    </recommendedName>
    <alternativeName>
        <fullName>Serine-threonine kinase 1</fullName>
    </alternativeName>
</protein>
<feature type="chain" id="PRO_0000085685" description="Serine/threonine-protein kinase bur1">
    <location>
        <begin position="1"/>
        <end position="559"/>
    </location>
</feature>
<feature type="domain" description="Protein kinase" evidence="2">
    <location>
        <begin position="40"/>
        <end position="341"/>
    </location>
</feature>
<feature type="region of interest" description="Disordered" evidence="4">
    <location>
        <begin position="359"/>
        <end position="559"/>
    </location>
</feature>
<feature type="compositionally biased region" description="Basic and acidic residues" evidence="4">
    <location>
        <begin position="359"/>
        <end position="372"/>
    </location>
</feature>
<feature type="compositionally biased region" description="Gly residues" evidence="4">
    <location>
        <begin position="400"/>
        <end position="414"/>
    </location>
</feature>
<feature type="compositionally biased region" description="Basic and acidic residues" evidence="4">
    <location>
        <begin position="457"/>
        <end position="467"/>
    </location>
</feature>
<feature type="compositionally biased region" description="Basic and acidic residues" evidence="4">
    <location>
        <begin position="491"/>
        <end position="534"/>
    </location>
</feature>
<feature type="compositionally biased region" description="Basic and acidic residues" evidence="4">
    <location>
        <begin position="543"/>
        <end position="559"/>
    </location>
</feature>
<feature type="active site" description="Proton acceptor" evidence="2 3">
    <location>
        <position position="171"/>
    </location>
</feature>
<feature type="binding site" evidence="2">
    <location>
        <begin position="46"/>
        <end position="54"/>
    </location>
    <ligand>
        <name>ATP</name>
        <dbReference type="ChEBI" id="CHEBI:30616"/>
    </ligand>
</feature>
<feature type="binding site" evidence="2">
    <location>
        <position position="69"/>
    </location>
    <ligand>
        <name>ATP</name>
        <dbReference type="ChEBI" id="CHEBI:30616"/>
    </ligand>
</feature>
<proteinExistence type="inferred from homology"/>
<dbReference type="EC" id="2.7.11.22"/>
<dbReference type="EC" id="2.7.11.23"/>
<dbReference type="EMBL" id="BX294023">
    <property type="protein sequence ID" value="CAD70970.1"/>
    <property type="status" value="ALT_INIT"/>
    <property type="molecule type" value="Genomic_DNA"/>
</dbReference>
<dbReference type="EMBL" id="CM002240">
    <property type="protein sequence ID" value="EAA26759.3"/>
    <property type="molecule type" value="Genomic_DNA"/>
</dbReference>
<dbReference type="RefSeq" id="XP_955995.3">
    <property type="nucleotide sequence ID" value="XM_950902.3"/>
</dbReference>
<dbReference type="SMR" id="Q871M9"/>
<dbReference type="FunCoup" id="Q871M9">
    <property type="interactions" value="195"/>
</dbReference>
<dbReference type="STRING" id="367110.Q871M9"/>
<dbReference type="PaxDb" id="5141-EFNCRP00000007589"/>
<dbReference type="EnsemblFungi" id="EAA26759">
    <property type="protein sequence ID" value="EAA26759"/>
    <property type="gene ID" value="NCU01435"/>
</dbReference>
<dbReference type="GeneID" id="3872142"/>
<dbReference type="KEGG" id="ncr:NCU01435"/>
<dbReference type="VEuPathDB" id="FungiDB:NCU01435"/>
<dbReference type="HOGENOM" id="CLU_000288_181_21_1"/>
<dbReference type="InParanoid" id="Q871M9"/>
<dbReference type="OrthoDB" id="28397at2759"/>
<dbReference type="Proteomes" id="UP000001805">
    <property type="component" value="Chromosome 2, Linkage Group V"/>
</dbReference>
<dbReference type="GO" id="GO:0000785">
    <property type="term" value="C:chromatin"/>
    <property type="evidence" value="ECO:0007669"/>
    <property type="project" value="EnsemblFungi"/>
</dbReference>
<dbReference type="GO" id="GO:0005634">
    <property type="term" value="C:nucleus"/>
    <property type="evidence" value="ECO:0000318"/>
    <property type="project" value="GO_Central"/>
</dbReference>
<dbReference type="GO" id="GO:0070691">
    <property type="term" value="C:P-TEFb complex"/>
    <property type="evidence" value="ECO:0007669"/>
    <property type="project" value="EnsemblFungi"/>
</dbReference>
<dbReference type="GO" id="GO:0070693">
    <property type="term" value="C:P-TEFb-cap methyltransferase complex"/>
    <property type="evidence" value="ECO:0007669"/>
    <property type="project" value="EnsemblFungi"/>
</dbReference>
<dbReference type="GO" id="GO:0005524">
    <property type="term" value="F:ATP binding"/>
    <property type="evidence" value="ECO:0007669"/>
    <property type="project" value="UniProtKB-KW"/>
</dbReference>
<dbReference type="GO" id="GO:0004693">
    <property type="term" value="F:cyclin-dependent protein serine/threonine kinase activity"/>
    <property type="evidence" value="ECO:0000318"/>
    <property type="project" value="GO_Central"/>
</dbReference>
<dbReference type="GO" id="GO:0106310">
    <property type="term" value="F:protein serine kinase activity"/>
    <property type="evidence" value="ECO:0007669"/>
    <property type="project" value="RHEA"/>
</dbReference>
<dbReference type="GO" id="GO:0008353">
    <property type="term" value="F:RNA polymerase II CTD heptapeptide repeat kinase activity"/>
    <property type="evidence" value="ECO:0007669"/>
    <property type="project" value="UniProtKB-EC"/>
</dbReference>
<dbReference type="GO" id="GO:0030643">
    <property type="term" value="P:intracellular phosphate ion homeostasis"/>
    <property type="evidence" value="ECO:0007669"/>
    <property type="project" value="EnsemblFungi"/>
</dbReference>
<dbReference type="GO" id="GO:0032968">
    <property type="term" value="P:positive regulation of transcription elongation by RNA polymerase II"/>
    <property type="evidence" value="ECO:0000318"/>
    <property type="project" value="GO_Central"/>
</dbReference>
<dbReference type="GO" id="GO:0006368">
    <property type="term" value="P:transcription elongation by RNA polymerase II"/>
    <property type="evidence" value="ECO:0007669"/>
    <property type="project" value="EnsemblFungi"/>
</dbReference>
<dbReference type="CDD" id="cd07866">
    <property type="entry name" value="STKc_BUR1"/>
    <property type="match status" value="1"/>
</dbReference>
<dbReference type="FunFam" id="3.30.200.20:FF:000514">
    <property type="entry name" value="Serine/threonine-protein kinase BUR1"/>
    <property type="match status" value="1"/>
</dbReference>
<dbReference type="FunFam" id="1.10.510.10:FF:000562">
    <property type="entry name" value="Serine/threonine-protein kinase bur1"/>
    <property type="match status" value="1"/>
</dbReference>
<dbReference type="Gene3D" id="3.30.200.20">
    <property type="entry name" value="Phosphorylase Kinase, domain 1"/>
    <property type="match status" value="1"/>
</dbReference>
<dbReference type="Gene3D" id="1.10.510.10">
    <property type="entry name" value="Transferase(Phosphotransferase) domain 1"/>
    <property type="match status" value="1"/>
</dbReference>
<dbReference type="InterPro" id="IPR050108">
    <property type="entry name" value="CDK"/>
</dbReference>
<dbReference type="InterPro" id="IPR011009">
    <property type="entry name" value="Kinase-like_dom_sf"/>
</dbReference>
<dbReference type="InterPro" id="IPR000719">
    <property type="entry name" value="Prot_kinase_dom"/>
</dbReference>
<dbReference type="InterPro" id="IPR017441">
    <property type="entry name" value="Protein_kinase_ATP_BS"/>
</dbReference>
<dbReference type="InterPro" id="IPR008271">
    <property type="entry name" value="Ser/Thr_kinase_AS"/>
</dbReference>
<dbReference type="PANTHER" id="PTHR24056">
    <property type="entry name" value="CELL DIVISION PROTEIN KINASE"/>
    <property type="match status" value="1"/>
</dbReference>
<dbReference type="PANTHER" id="PTHR24056:SF233">
    <property type="entry name" value="CYCLIN-DEPENDENT KINASE 9"/>
    <property type="match status" value="1"/>
</dbReference>
<dbReference type="Pfam" id="PF00069">
    <property type="entry name" value="Pkinase"/>
    <property type="match status" value="1"/>
</dbReference>
<dbReference type="SMART" id="SM00220">
    <property type="entry name" value="S_TKc"/>
    <property type="match status" value="1"/>
</dbReference>
<dbReference type="SUPFAM" id="SSF56112">
    <property type="entry name" value="Protein kinase-like (PK-like)"/>
    <property type="match status" value="1"/>
</dbReference>
<dbReference type="PROSITE" id="PS00107">
    <property type="entry name" value="PROTEIN_KINASE_ATP"/>
    <property type="match status" value="1"/>
</dbReference>
<dbReference type="PROSITE" id="PS50011">
    <property type="entry name" value="PROTEIN_KINASE_DOM"/>
    <property type="match status" value="1"/>
</dbReference>
<dbReference type="PROSITE" id="PS00108">
    <property type="entry name" value="PROTEIN_KINASE_ST"/>
    <property type="match status" value="1"/>
</dbReference>
<evidence type="ECO:0000250" key="1"/>
<evidence type="ECO:0000255" key="2">
    <source>
        <dbReference type="PROSITE-ProRule" id="PRU00159"/>
    </source>
</evidence>
<evidence type="ECO:0000255" key="3">
    <source>
        <dbReference type="PROSITE-ProRule" id="PRU10027"/>
    </source>
</evidence>
<evidence type="ECO:0000256" key="4">
    <source>
        <dbReference type="SAM" id="MobiDB-lite"/>
    </source>
</evidence>
<evidence type="ECO:0000305" key="5"/>
<gene>
    <name type="primary">stk-1</name>
    <name type="synonym">bur1</name>
    <name type="ORF">B20D17.070</name>
    <name type="ORF">NCU01435</name>
</gene>
<name>BUR1_NEUCR</name>
<organism>
    <name type="scientific">Neurospora crassa (strain ATCC 24698 / 74-OR23-1A / CBS 708.71 / DSM 1257 / FGSC 987)</name>
    <dbReference type="NCBI Taxonomy" id="367110"/>
    <lineage>
        <taxon>Eukaryota</taxon>
        <taxon>Fungi</taxon>
        <taxon>Dikarya</taxon>
        <taxon>Ascomycota</taxon>
        <taxon>Pezizomycotina</taxon>
        <taxon>Sordariomycetes</taxon>
        <taxon>Sordariomycetidae</taxon>
        <taxon>Sordariales</taxon>
        <taxon>Sordariaceae</taxon>
        <taxon>Neurospora</taxon>
    </lineage>
</organism>
<reference key="1">
    <citation type="journal article" date="2003" name="Nucleic Acids Res.">
        <title>What's in the genome of a filamentous fungus? Analysis of the Neurospora genome sequence.</title>
        <authorList>
            <person name="Mannhaupt G."/>
            <person name="Montrone C."/>
            <person name="Haase D."/>
            <person name="Mewes H.-W."/>
            <person name="Aign V."/>
            <person name="Hoheisel J.D."/>
            <person name="Fartmann B."/>
            <person name="Nyakatura G."/>
            <person name="Kempken F."/>
            <person name="Maier J."/>
            <person name="Schulte U."/>
        </authorList>
    </citation>
    <scope>NUCLEOTIDE SEQUENCE [LARGE SCALE GENOMIC DNA]</scope>
    <source>
        <strain>ATCC 24698 / 74-OR23-1A / CBS 708.71 / DSM 1257 / FGSC 987</strain>
    </source>
</reference>
<reference key="2">
    <citation type="journal article" date="2003" name="Nature">
        <title>The genome sequence of the filamentous fungus Neurospora crassa.</title>
        <authorList>
            <person name="Galagan J.E."/>
            <person name="Calvo S.E."/>
            <person name="Borkovich K.A."/>
            <person name="Selker E.U."/>
            <person name="Read N.D."/>
            <person name="Jaffe D.B."/>
            <person name="FitzHugh W."/>
            <person name="Ma L.-J."/>
            <person name="Smirnov S."/>
            <person name="Purcell S."/>
            <person name="Rehman B."/>
            <person name="Elkins T."/>
            <person name="Engels R."/>
            <person name="Wang S."/>
            <person name="Nielsen C.B."/>
            <person name="Butler J."/>
            <person name="Endrizzi M."/>
            <person name="Qui D."/>
            <person name="Ianakiev P."/>
            <person name="Bell-Pedersen D."/>
            <person name="Nelson M.A."/>
            <person name="Werner-Washburne M."/>
            <person name="Selitrennikoff C.P."/>
            <person name="Kinsey J.A."/>
            <person name="Braun E.L."/>
            <person name="Zelter A."/>
            <person name="Schulte U."/>
            <person name="Kothe G.O."/>
            <person name="Jedd G."/>
            <person name="Mewes H.-W."/>
            <person name="Staben C."/>
            <person name="Marcotte E."/>
            <person name="Greenberg D."/>
            <person name="Roy A."/>
            <person name="Foley K."/>
            <person name="Naylor J."/>
            <person name="Stange-Thomann N."/>
            <person name="Barrett R."/>
            <person name="Gnerre S."/>
            <person name="Kamal M."/>
            <person name="Kamvysselis M."/>
            <person name="Mauceli E.W."/>
            <person name="Bielke C."/>
            <person name="Rudd S."/>
            <person name="Frishman D."/>
            <person name="Krystofova S."/>
            <person name="Rasmussen C."/>
            <person name="Metzenberg R.L."/>
            <person name="Perkins D.D."/>
            <person name="Kroken S."/>
            <person name="Cogoni C."/>
            <person name="Macino G."/>
            <person name="Catcheside D.E.A."/>
            <person name="Li W."/>
            <person name="Pratt R.J."/>
            <person name="Osmani S.A."/>
            <person name="DeSouza C.P.C."/>
            <person name="Glass N.L."/>
            <person name="Orbach M.J."/>
            <person name="Berglund J.A."/>
            <person name="Voelker R."/>
            <person name="Yarden O."/>
            <person name="Plamann M."/>
            <person name="Seiler S."/>
            <person name="Dunlap J.C."/>
            <person name="Radford A."/>
            <person name="Aramayo R."/>
            <person name="Natvig D.O."/>
            <person name="Alex L.A."/>
            <person name="Mannhaupt G."/>
            <person name="Ebbole D.J."/>
            <person name="Freitag M."/>
            <person name="Paulsen I."/>
            <person name="Sachs M.S."/>
            <person name="Lander E.S."/>
            <person name="Nusbaum C."/>
            <person name="Birren B.W."/>
        </authorList>
    </citation>
    <scope>NUCLEOTIDE SEQUENCE [LARGE SCALE GENOMIC DNA]</scope>
    <source>
        <strain>ATCC 24698 / 74-OR23-1A / CBS 708.71 / DSM 1257 / FGSC 987</strain>
    </source>
</reference>
<accession>Q871M9</accession>
<accession>Q7RWH6</accession>
<comment type="function">
    <text evidence="1">Serine/threonine-protein kinase involved in transcription regulation. Phosphorylates the mus-8/ubc2 ubiquitin-conjugating enzyme (E2), leading to monoubiquitination of histone H2B and the silencing of telomeric-associated genes. Also required for histone H3 methylation. Necessary for the recovery from pheromone-induced growth arrest in the cell cycle G1 phase (By similarity).</text>
</comment>
<comment type="catalytic activity">
    <reaction>
        <text>L-seryl-[protein] + ATP = O-phospho-L-seryl-[protein] + ADP + H(+)</text>
        <dbReference type="Rhea" id="RHEA:17989"/>
        <dbReference type="Rhea" id="RHEA-COMP:9863"/>
        <dbReference type="Rhea" id="RHEA-COMP:11604"/>
        <dbReference type="ChEBI" id="CHEBI:15378"/>
        <dbReference type="ChEBI" id="CHEBI:29999"/>
        <dbReference type="ChEBI" id="CHEBI:30616"/>
        <dbReference type="ChEBI" id="CHEBI:83421"/>
        <dbReference type="ChEBI" id="CHEBI:456216"/>
        <dbReference type="EC" id="2.7.11.22"/>
    </reaction>
</comment>
<comment type="catalytic activity">
    <reaction>
        <text>L-threonyl-[protein] + ATP = O-phospho-L-threonyl-[protein] + ADP + H(+)</text>
        <dbReference type="Rhea" id="RHEA:46608"/>
        <dbReference type="Rhea" id="RHEA-COMP:11060"/>
        <dbReference type="Rhea" id="RHEA-COMP:11605"/>
        <dbReference type="ChEBI" id="CHEBI:15378"/>
        <dbReference type="ChEBI" id="CHEBI:30013"/>
        <dbReference type="ChEBI" id="CHEBI:30616"/>
        <dbReference type="ChEBI" id="CHEBI:61977"/>
        <dbReference type="ChEBI" id="CHEBI:456216"/>
        <dbReference type="EC" id="2.7.11.22"/>
    </reaction>
</comment>
<comment type="catalytic activity">
    <reaction>
        <text>[DNA-directed RNA polymerase] + ATP = phospho-[DNA-directed RNA polymerase] + ADP + H(+)</text>
        <dbReference type="Rhea" id="RHEA:10216"/>
        <dbReference type="Rhea" id="RHEA-COMP:11321"/>
        <dbReference type="Rhea" id="RHEA-COMP:11322"/>
        <dbReference type="ChEBI" id="CHEBI:15378"/>
        <dbReference type="ChEBI" id="CHEBI:30616"/>
        <dbReference type="ChEBI" id="CHEBI:43176"/>
        <dbReference type="ChEBI" id="CHEBI:68546"/>
        <dbReference type="ChEBI" id="CHEBI:456216"/>
        <dbReference type="EC" id="2.7.11.23"/>
    </reaction>
</comment>
<comment type="subcellular location">
    <subcellularLocation>
        <location evidence="1">Nucleus</location>
    </subcellularLocation>
</comment>
<comment type="similarity">
    <text evidence="5">Belongs to the protein kinase superfamily. CMGC Ser/Thr protein kinase family. CDC2/CDKX subfamily.</text>
</comment>
<comment type="sequence caution" evidence="5">
    <conflict type="erroneous initiation">
        <sequence resource="EMBL-CDS" id="CAD70970"/>
    </conflict>
    <text>Truncated N-terminus.</text>
</comment>
<sequence length="559" mass="62666">MSIDEAKEGGGGPAMSPRAFALAHQRDRGSFVGCSRIADYEVLGKLGEGTFGEVHRARSRKTGALVALKKIIMHNERDGFPITALREIKLLKLLSHKNVLRLEEMAIEHPPRTDKRTRPIVYMVTPYMDHDLSGLLDNPSVRFTEPQVKCYLLQLLEGLKYLHANHILHRDMKAANLLINNKGVLQIADFGLARHYEGDIPQPGKGSGEGKRDYTSLVVTRWYRPPELLMHLKRYTTAIDMWGVGCVFAEMLEGKPVLQGESDLHQLELVWDLCGTPSEETMPGWRTLPGGQAFSSKPRPGNLARRFEKHGPVVISLLKELFKLDWRSRINAIDALNHPYFRTAPLPALPGDLPTFEESHEFDRRKFQDRKAALPPAPKGGTVGRGAVVNSQGPDTGFSGRDGYGGGGRNGANGGRYPPYHRGPPPGDERVPSWHSARGLPPRPPMPADYHGSGPMDHTDGYRDRPPRRGPGGPPGGGGGPSNVDTYIPSYDRDGPAPRREDWRRRDDWDDRRGGVDRDRRRPEYDVRSRDSRTRSRTRSRSPVRDRDRGRDRDAYARR</sequence>
<keyword id="KW-0067">ATP-binding</keyword>
<keyword id="KW-0418">Kinase</keyword>
<keyword id="KW-0547">Nucleotide-binding</keyword>
<keyword id="KW-0539">Nucleus</keyword>
<keyword id="KW-1185">Reference proteome</keyword>
<keyword id="KW-0723">Serine/threonine-protein kinase</keyword>
<keyword id="KW-0808">Transferase</keyword>